<feature type="chain" id="PRO_1000085594" description="Acyl carrier protein">
    <location>
        <begin position="1"/>
        <end position="78"/>
    </location>
</feature>
<feature type="domain" description="Carrier" evidence="2">
    <location>
        <begin position="2"/>
        <end position="77"/>
    </location>
</feature>
<feature type="modified residue" description="O-(pantetheine 4'-phosphoryl)serine" evidence="2">
    <location>
        <position position="37"/>
    </location>
</feature>
<organism>
    <name type="scientific">Bartonella tribocorum (strain CIP 105476 / IBS 506)</name>
    <dbReference type="NCBI Taxonomy" id="382640"/>
    <lineage>
        <taxon>Bacteria</taxon>
        <taxon>Pseudomonadati</taxon>
        <taxon>Pseudomonadota</taxon>
        <taxon>Alphaproteobacteria</taxon>
        <taxon>Hyphomicrobiales</taxon>
        <taxon>Bartonellaceae</taxon>
        <taxon>Bartonella</taxon>
    </lineage>
</organism>
<proteinExistence type="inferred from homology"/>
<name>ACP_BART1</name>
<gene>
    <name evidence="1" type="primary">acpP</name>
    <name type="ordered locus">BT_0818</name>
</gene>
<reference key="1">
    <citation type="journal article" date="2007" name="Nat. Genet.">
        <title>Genomic analysis of Bartonella identifies type IV secretion systems as host adaptability factors.</title>
        <authorList>
            <person name="Saenz H.L."/>
            <person name="Engel P."/>
            <person name="Stoeckli M.C."/>
            <person name="Lanz C."/>
            <person name="Raddatz G."/>
            <person name="Vayssier-Taussat M."/>
            <person name="Birtles R."/>
            <person name="Schuster S.C."/>
            <person name="Dehio C."/>
        </authorList>
    </citation>
    <scope>NUCLEOTIDE SEQUENCE [LARGE SCALE GENOMIC DNA]</scope>
    <source>
        <strain>CIP 105476 / IBS 506</strain>
    </source>
</reference>
<dbReference type="EMBL" id="AM260525">
    <property type="protein sequence ID" value="CAK01228.1"/>
    <property type="molecule type" value="Genomic_DNA"/>
</dbReference>
<dbReference type="RefSeq" id="WP_004860281.1">
    <property type="nucleotide sequence ID" value="NC_010161.1"/>
</dbReference>
<dbReference type="SMR" id="A9IRV7"/>
<dbReference type="KEGG" id="btr:BT_0818"/>
<dbReference type="eggNOG" id="COG0236">
    <property type="taxonomic scope" value="Bacteria"/>
</dbReference>
<dbReference type="HOGENOM" id="CLU_108696_5_1_5"/>
<dbReference type="UniPathway" id="UPA00094"/>
<dbReference type="Proteomes" id="UP000001592">
    <property type="component" value="Chromosome"/>
</dbReference>
<dbReference type="GO" id="GO:0005829">
    <property type="term" value="C:cytosol"/>
    <property type="evidence" value="ECO:0007669"/>
    <property type="project" value="TreeGrafter"/>
</dbReference>
<dbReference type="GO" id="GO:0016020">
    <property type="term" value="C:membrane"/>
    <property type="evidence" value="ECO:0007669"/>
    <property type="project" value="GOC"/>
</dbReference>
<dbReference type="GO" id="GO:0000035">
    <property type="term" value="F:acyl binding"/>
    <property type="evidence" value="ECO:0007669"/>
    <property type="project" value="TreeGrafter"/>
</dbReference>
<dbReference type="GO" id="GO:0000036">
    <property type="term" value="F:acyl carrier activity"/>
    <property type="evidence" value="ECO:0007669"/>
    <property type="project" value="UniProtKB-UniRule"/>
</dbReference>
<dbReference type="GO" id="GO:0031177">
    <property type="term" value="F:phosphopantetheine binding"/>
    <property type="evidence" value="ECO:0007669"/>
    <property type="project" value="InterPro"/>
</dbReference>
<dbReference type="GO" id="GO:0009245">
    <property type="term" value="P:lipid A biosynthetic process"/>
    <property type="evidence" value="ECO:0007669"/>
    <property type="project" value="TreeGrafter"/>
</dbReference>
<dbReference type="FunFam" id="1.10.1200.10:FF:000001">
    <property type="entry name" value="Acyl carrier protein"/>
    <property type="match status" value="1"/>
</dbReference>
<dbReference type="Gene3D" id="1.10.1200.10">
    <property type="entry name" value="ACP-like"/>
    <property type="match status" value="1"/>
</dbReference>
<dbReference type="HAMAP" id="MF_01217">
    <property type="entry name" value="Acyl_carrier"/>
    <property type="match status" value="1"/>
</dbReference>
<dbReference type="InterPro" id="IPR003231">
    <property type="entry name" value="ACP"/>
</dbReference>
<dbReference type="InterPro" id="IPR036736">
    <property type="entry name" value="ACP-like_sf"/>
</dbReference>
<dbReference type="InterPro" id="IPR020806">
    <property type="entry name" value="PKS_PP-bd"/>
</dbReference>
<dbReference type="InterPro" id="IPR009081">
    <property type="entry name" value="PP-bd_ACP"/>
</dbReference>
<dbReference type="InterPro" id="IPR006162">
    <property type="entry name" value="Ppantetheine_attach_site"/>
</dbReference>
<dbReference type="NCBIfam" id="TIGR00517">
    <property type="entry name" value="acyl_carrier"/>
    <property type="match status" value="1"/>
</dbReference>
<dbReference type="NCBIfam" id="NF002148">
    <property type="entry name" value="PRK00982.1-2"/>
    <property type="match status" value="1"/>
</dbReference>
<dbReference type="NCBIfam" id="NF002149">
    <property type="entry name" value="PRK00982.1-3"/>
    <property type="match status" value="1"/>
</dbReference>
<dbReference type="NCBIfam" id="NF002150">
    <property type="entry name" value="PRK00982.1-4"/>
    <property type="match status" value="1"/>
</dbReference>
<dbReference type="NCBIfam" id="NF002151">
    <property type="entry name" value="PRK00982.1-5"/>
    <property type="match status" value="1"/>
</dbReference>
<dbReference type="PANTHER" id="PTHR20863">
    <property type="entry name" value="ACYL CARRIER PROTEIN"/>
    <property type="match status" value="1"/>
</dbReference>
<dbReference type="PANTHER" id="PTHR20863:SF76">
    <property type="entry name" value="CARRIER DOMAIN-CONTAINING PROTEIN"/>
    <property type="match status" value="1"/>
</dbReference>
<dbReference type="Pfam" id="PF00550">
    <property type="entry name" value="PP-binding"/>
    <property type="match status" value="1"/>
</dbReference>
<dbReference type="SMART" id="SM00823">
    <property type="entry name" value="PKS_PP"/>
    <property type="match status" value="1"/>
</dbReference>
<dbReference type="SUPFAM" id="SSF47336">
    <property type="entry name" value="ACP-like"/>
    <property type="match status" value="1"/>
</dbReference>
<dbReference type="PROSITE" id="PS50075">
    <property type="entry name" value="CARRIER"/>
    <property type="match status" value="1"/>
</dbReference>
<dbReference type="PROSITE" id="PS00012">
    <property type="entry name" value="PHOSPHOPANTETHEINE"/>
    <property type="match status" value="1"/>
</dbReference>
<sequence>MSDTVERVKKIIVEHLGVNADKVVENASFIDDLGADSLDTVELVMAFEEEFGVEIPDEAAETIFTVGDAVKFIDKASA</sequence>
<protein>
    <recommendedName>
        <fullName evidence="1">Acyl carrier protein</fullName>
        <shortName evidence="1">ACP</shortName>
    </recommendedName>
</protein>
<keyword id="KW-0963">Cytoplasm</keyword>
<keyword id="KW-0275">Fatty acid biosynthesis</keyword>
<keyword id="KW-0276">Fatty acid metabolism</keyword>
<keyword id="KW-0444">Lipid biosynthesis</keyword>
<keyword id="KW-0443">Lipid metabolism</keyword>
<keyword id="KW-0596">Phosphopantetheine</keyword>
<keyword id="KW-0597">Phosphoprotein</keyword>
<evidence type="ECO:0000255" key="1">
    <source>
        <dbReference type="HAMAP-Rule" id="MF_01217"/>
    </source>
</evidence>
<evidence type="ECO:0000255" key="2">
    <source>
        <dbReference type="PROSITE-ProRule" id="PRU00258"/>
    </source>
</evidence>
<accession>A9IRV7</accession>
<comment type="function">
    <text evidence="1">Carrier of the growing fatty acid chain in fatty acid biosynthesis.</text>
</comment>
<comment type="pathway">
    <text evidence="1">Lipid metabolism; fatty acid biosynthesis.</text>
</comment>
<comment type="subcellular location">
    <subcellularLocation>
        <location evidence="1">Cytoplasm</location>
    </subcellularLocation>
</comment>
<comment type="PTM">
    <text evidence="1">4'-phosphopantetheine is transferred from CoA to a specific serine of apo-ACP by AcpS. This modification is essential for activity because fatty acids are bound in thioester linkage to the sulfhydryl of the prosthetic group.</text>
</comment>
<comment type="similarity">
    <text evidence="1">Belongs to the acyl carrier protein (ACP) family.</text>
</comment>